<keyword id="KW-0010">Activator</keyword>
<keyword id="KW-0175">Coiled coil</keyword>
<keyword id="KW-0217">Developmental protein</keyword>
<keyword id="KW-0221">Differentiation</keyword>
<keyword id="KW-0238">DNA-binding</keyword>
<keyword id="KW-0287">Flowering</keyword>
<keyword id="KW-0539">Nucleus</keyword>
<keyword id="KW-0804">Transcription</keyword>
<keyword id="KW-0805">Transcription regulation</keyword>
<protein>
    <recommendedName>
        <fullName>Transcription factor CAULIFLOWER</fullName>
        <shortName>BcrCAL</shortName>
    </recommendedName>
    <alternativeName>
        <fullName>Agamous-like MADS-box protein CAL</fullName>
    </alternativeName>
</protein>
<dbReference type="EMBL" id="AY514048">
    <property type="protein sequence ID" value="AAS67306.1"/>
    <property type="molecule type" value="mRNA"/>
</dbReference>
<dbReference type="SMR" id="Q6R4S3"/>
<dbReference type="GO" id="GO:0005634">
    <property type="term" value="C:nucleus"/>
    <property type="evidence" value="ECO:0007669"/>
    <property type="project" value="UniProtKB-SubCell"/>
</dbReference>
<dbReference type="GO" id="GO:0003700">
    <property type="term" value="F:DNA-binding transcription factor activity"/>
    <property type="evidence" value="ECO:0007669"/>
    <property type="project" value="InterPro"/>
</dbReference>
<dbReference type="GO" id="GO:0046983">
    <property type="term" value="F:protein dimerization activity"/>
    <property type="evidence" value="ECO:0007669"/>
    <property type="project" value="InterPro"/>
</dbReference>
<dbReference type="GO" id="GO:0000977">
    <property type="term" value="F:RNA polymerase II transcription regulatory region sequence-specific DNA binding"/>
    <property type="evidence" value="ECO:0007669"/>
    <property type="project" value="InterPro"/>
</dbReference>
<dbReference type="GO" id="GO:0030154">
    <property type="term" value="P:cell differentiation"/>
    <property type="evidence" value="ECO:0007669"/>
    <property type="project" value="UniProtKB-KW"/>
</dbReference>
<dbReference type="GO" id="GO:0009908">
    <property type="term" value="P:flower development"/>
    <property type="evidence" value="ECO:0007669"/>
    <property type="project" value="UniProtKB-KW"/>
</dbReference>
<dbReference type="GO" id="GO:0045944">
    <property type="term" value="P:positive regulation of transcription by RNA polymerase II"/>
    <property type="evidence" value="ECO:0007669"/>
    <property type="project" value="InterPro"/>
</dbReference>
<dbReference type="CDD" id="cd00265">
    <property type="entry name" value="MADS_MEF2_like"/>
    <property type="match status" value="1"/>
</dbReference>
<dbReference type="FunFam" id="3.40.1810.10:FF:000003">
    <property type="entry name" value="MADS-box transcription factor MADS-MC"/>
    <property type="match status" value="1"/>
</dbReference>
<dbReference type="Gene3D" id="3.40.1810.10">
    <property type="entry name" value="Transcription factor, MADS-box"/>
    <property type="match status" value="1"/>
</dbReference>
<dbReference type="InterPro" id="IPR050142">
    <property type="entry name" value="MADS-box/MEF2_TF"/>
</dbReference>
<dbReference type="InterPro" id="IPR033896">
    <property type="entry name" value="MEF2-like_N"/>
</dbReference>
<dbReference type="InterPro" id="IPR002487">
    <property type="entry name" value="TF_Kbox"/>
</dbReference>
<dbReference type="InterPro" id="IPR002100">
    <property type="entry name" value="TF_MADSbox"/>
</dbReference>
<dbReference type="InterPro" id="IPR036879">
    <property type="entry name" value="TF_MADSbox_sf"/>
</dbReference>
<dbReference type="PANTHER" id="PTHR48019">
    <property type="entry name" value="SERUM RESPONSE FACTOR HOMOLOG"/>
    <property type="match status" value="1"/>
</dbReference>
<dbReference type="Pfam" id="PF01486">
    <property type="entry name" value="K-box"/>
    <property type="match status" value="1"/>
</dbReference>
<dbReference type="Pfam" id="PF00319">
    <property type="entry name" value="SRF-TF"/>
    <property type="match status" value="1"/>
</dbReference>
<dbReference type="PRINTS" id="PR00404">
    <property type="entry name" value="MADSDOMAIN"/>
</dbReference>
<dbReference type="SMART" id="SM00432">
    <property type="entry name" value="MADS"/>
    <property type="match status" value="1"/>
</dbReference>
<dbReference type="SUPFAM" id="SSF55455">
    <property type="entry name" value="SRF-like"/>
    <property type="match status" value="1"/>
</dbReference>
<dbReference type="PROSITE" id="PS51297">
    <property type="entry name" value="K_BOX"/>
    <property type="match status" value="1"/>
</dbReference>
<dbReference type="PROSITE" id="PS00350">
    <property type="entry name" value="MADS_BOX_1"/>
    <property type="match status" value="1"/>
</dbReference>
<dbReference type="PROSITE" id="PS50066">
    <property type="entry name" value="MADS_BOX_2"/>
    <property type="match status" value="1"/>
</dbReference>
<feature type="chain" id="PRO_0000417145" description="Transcription factor CAULIFLOWER">
    <location>
        <begin position="1"/>
        <end position="254"/>
    </location>
</feature>
<feature type="domain" description="MADS-box" evidence="2">
    <location>
        <begin position="1"/>
        <end position="61"/>
    </location>
</feature>
<feature type="domain" description="K-box" evidence="3">
    <location>
        <begin position="90"/>
        <end position="180"/>
    </location>
</feature>
<feature type="region of interest" description="Disordered" evidence="4">
    <location>
        <begin position="182"/>
        <end position="205"/>
    </location>
</feature>
<feature type="compositionally biased region" description="Polar residues" evidence="4">
    <location>
        <begin position="182"/>
        <end position="191"/>
    </location>
</feature>
<reference key="1">
    <citation type="submission" date="2003-12" db="EMBL/GenBank/DDBJ databases">
        <authorList>
            <person name="He Y.-K."/>
            <person name="Cao W.-G."/>
            <person name="Shen R.-J."/>
            <person name="Liu P.-L."/>
        </authorList>
    </citation>
    <scope>NUCLEOTIDE SEQUENCE [MRNA]</scope>
    <source>
        <strain>cv. rapifera</strain>
    </source>
</reference>
<reference key="2">
    <citation type="journal article" date="2000" name="Genetics">
        <title>Variation and selection at the CAULIFLOWER floral homeotic gene accompanying the evolution of domesticated Brassica oleracea.</title>
        <authorList>
            <person name="Purugganan M.D."/>
            <person name="Boyles A.L."/>
            <person name="Suddith J.I."/>
        </authorList>
    </citation>
    <scope>REVIEW</scope>
    <scope>GENE FAMILY</scope>
</reference>
<proteinExistence type="evidence at transcript level"/>
<gene>
    <name type="primary">CAL</name>
</gene>
<comment type="function">
    <text evidence="1">Probable transcription factor that promotes early floral meristem identity in synergy with APETALA1, FRUITFULL and LEAFY. Is required subsequently for the transition of an inflorescence meristem into a floral meristem. Seems to be partially redundant to the function of APETALA1 (By similarity).</text>
</comment>
<comment type="subunit">
    <text evidence="1">Homodimer capable of binding to CArG-box sequences.</text>
</comment>
<comment type="subcellular location">
    <subcellularLocation>
        <location evidence="2">Nucleus</location>
    </subcellularLocation>
</comment>
<comment type="miscellaneous">
    <text>CAULIFLOWER may contribute to the shape of the floral meristem. This trait has likely been selected by early farmers during the domestication of modified inflorescence structures.</text>
</comment>
<evidence type="ECO:0000250" key="1"/>
<evidence type="ECO:0000255" key="2">
    <source>
        <dbReference type="PROSITE-ProRule" id="PRU00251"/>
    </source>
</evidence>
<evidence type="ECO:0000255" key="3">
    <source>
        <dbReference type="PROSITE-ProRule" id="PRU00629"/>
    </source>
</evidence>
<evidence type="ECO:0000256" key="4">
    <source>
        <dbReference type="SAM" id="MobiDB-lite"/>
    </source>
</evidence>
<sequence>MGRGRVEMKRIENKINRQVTFSKRRAGLLKKAHEISILCDAEVSLIVFSHKGKLFEYSSESCMEKVLERYERYSYAEKQLKAPDSHVNAQTNWSMEYSRLKAKIELLERNQRHYLGEDLESISIKELQNLEQQLDTSLKHIRSRKNQLMHESLNHLQRKEKEILEENSMLTKQIKERESILRTHQNQSEQQNRSHHVAPQPQPQLNPYMISHQASPFLNMGGMYQGEDPTAVRRNRLDLTLEPIYNCNLGYFAA</sequence>
<name>CAL_BRARR</name>
<accession>Q6R4S3</accession>
<organism>
    <name type="scientific">Brassica rapa subsp. rapa</name>
    <name type="common">Turnip</name>
    <dbReference type="NCBI Taxonomy" id="51350"/>
    <lineage>
        <taxon>Eukaryota</taxon>
        <taxon>Viridiplantae</taxon>
        <taxon>Streptophyta</taxon>
        <taxon>Embryophyta</taxon>
        <taxon>Tracheophyta</taxon>
        <taxon>Spermatophyta</taxon>
        <taxon>Magnoliopsida</taxon>
        <taxon>eudicotyledons</taxon>
        <taxon>Gunneridae</taxon>
        <taxon>Pentapetalae</taxon>
        <taxon>rosids</taxon>
        <taxon>malvids</taxon>
        <taxon>Brassicales</taxon>
        <taxon>Brassicaceae</taxon>
        <taxon>Brassiceae</taxon>
        <taxon>Brassica</taxon>
    </lineage>
</organism>